<accession>O46580</accession>
<comment type="function">
    <text evidence="2">Component of the cytochrome c oxidase, the last enzyme in the mitochondrial electron transport chain which drives oxidative phosphorylation. The respiratory chain contains 3 multisubunit complexes succinate dehydrogenase (complex II, CII), ubiquinol-cytochrome c oxidoreductase (cytochrome b-c1 complex, complex III, CIII) and cytochrome c oxidase (complex IV, CIV), that cooperate to transfer electrons derived from NADH and succinate to molecular oxygen, creating an electrochemical gradient over the inner membrane that drives transmembrane transport and the ATP synthase. Cytochrome c oxidase is the component of the respiratory chain that catalyzes the reduction of oxygen to water. Electrons originating from reduced cytochrome c in the intermembrane space (IMS) are transferred via the dinuclear copper A center (CU(A)) of subunit 2 and heme A of subunit 1 to the active site in subunit 1, a binuclear center (BNC) formed by heme A3 and copper B (CU(B)). The BNC reduces molecular oxygen to 2 water molecules using 4 electrons from cytochrome c in the IMS and 4 protons from the mitochondrial matrix.</text>
</comment>
<comment type="pathway">
    <text evidence="2">Energy metabolism; oxidative phosphorylation.</text>
</comment>
<comment type="subunit">
    <text evidence="1 3 4 5">Component of the cytochrome c oxidase (complex IV, CIV), a multisubunit enzyme composed of 14 subunits. The complex is composed of a catalytic core of 3 subunits MT-CO1, MT-CO2 and MT-CO3, encoded in the mitochondrial DNA, and 11 supernumerary subunits COX4I, COX5A, COX5B, COX6A, COX6B, COX6C, COX7A, COX7B, COX7C, COX8 and NDUFA4, which are encoded in the nuclear genome. The complex exists as a monomer or a dimer and forms supercomplexes (SCs) in the inner mitochondrial membrane with NADH-ubiquinone oxidoreductase (complex I, CI) and ubiquinol-cytochrome c oxidoreductase (cytochrome b-c1 complex, complex III, CIII), resulting in different assemblies (supercomplex SCI(1)III(2)IV(1) and megacomplex MCI(2)III(2)IV(2)) (By similarity). Interacts with PHB2; the interaction decreases in absence of SPHK2 (By similarity). Interacts with AFG1L (By similarity). Interacts with ABCB7; this interaction allows the regulation of cellular iron homeostasis and cellular reactive oxygen species (ROS) levels in cardiomyocytes (By similarity). Interacts with FLVCR2; this interaction occurs in the absence of heme and is disrupted upon heme binding. Interacts with IRGC (By similarity).</text>
</comment>
<comment type="subcellular location">
    <subcellularLocation>
        <location evidence="1">Mitochondrion inner membrane</location>
        <topology evidence="1">Single-pass membrane protein</topology>
    </subcellularLocation>
</comment>
<comment type="similarity">
    <text evidence="6">Belongs to the cytochrome c oxidase IV family.</text>
</comment>
<keyword id="KW-0007">Acetylation</keyword>
<keyword id="KW-0472">Membrane</keyword>
<keyword id="KW-0496">Mitochondrion</keyword>
<keyword id="KW-0999">Mitochondrion inner membrane</keyword>
<keyword id="KW-0597">Phosphoprotein</keyword>
<keyword id="KW-0812">Transmembrane</keyword>
<keyword id="KW-1133">Transmembrane helix</keyword>
<feature type="chain" id="PRO_0000194075" description="Cytochrome c oxidase subunit 4 isoform 1, mitochondrial">
    <location>
        <begin position="1" status="less than"/>
        <end position="144"/>
    </location>
</feature>
<feature type="topological domain" description="Mitochondrial matrix" evidence="1">
    <location>
        <begin position="1" status="less than"/>
        <end position="73"/>
    </location>
</feature>
<feature type="transmembrane region" description="Helical" evidence="1">
    <location>
        <begin position="74"/>
        <end position="99"/>
    </location>
</feature>
<feature type="topological domain" description="Mitochondrial intermembrane" evidence="1">
    <location>
        <begin position="100"/>
        <end position="144"/>
    </location>
</feature>
<feature type="modified residue" description="N6-acetyllysine; alternate" evidence="5">
    <location>
        <position position="4"/>
    </location>
</feature>
<feature type="modified residue" description="N6-succinyllysine; alternate" evidence="5">
    <location>
        <position position="4"/>
    </location>
</feature>
<feature type="modified residue" description="N6-acetyllysine" evidence="4">
    <location>
        <position position="28"/>
    </location>
</feature>
<feature type="modified residue" description="Phosphoserine" evidence="3">
    <location>
        <position position="31"/>
    </location>
</feature>
<feature type="modified residue" description="Phosphoserine" evidence="3">
    <location>
        <position position="33"/>
    </location>
</feature>
<feature type="modified residue" description="N6-acetyllysine; alternate" evidence="4">
    <location>
        <position position="35"/>
    </location>
</feature>
<feature type="modified residue" description="N6-succinyllysine; alternate" evidence="5">
    <location>
        <position position="35"/>
    </location>
</feature>
<feature type="modified residue" description="N6-acetyllysine" evidence="5">
    <location>
        <position position="42"/>
    </location>
</feature>
<feature type="non-terminal residue">
    <location>
        <position position="1"/>
    </location>
</feature>
<dbReference type="EMBL" id="AH005831">
    <property type="protein sequence ID" value="AAB97753.1"/>
    <property type="molecule type" value="Genomic_DNA"/>
</dbReference>
<dbReference type="SMR" id="O46580"/>
<dbReference type="UniPathway" id="UPA00705"/>
<dbReference type="GO" id="GO:0005743">
    <property type="term" value="C:mitochondrial inner membrane"/>
    <property type="evidence" value="ECO:0000250"/>
    <property type="project" value="UniProtKB"/>
</dbReference>
<dbReference type="GO" id="GO:0045277">
    <property type="term" value="C:respiratory chain complex IV"/>
    <property type="evidence" value="ECO:0007669"/>
    <property type="project" value="InterPro"/>
</dbReference>
<dbReference type="GO" id="GO:0006123">
    <property type="term" value="P:mitochondrial electron transport, cytochrome c to oxygen"/>
    <property type="evidence" value="ECO:0007669"/>
    <property type="project" value="InterPro"/>
</dbReference>
<dbReference type="CDD" id="cd00922">
    <property type="entry name" value="Cyt_c_Oxidase_IV"/>
    <property type="match status" value="1"/>
</dbReference>
<dbReference type="FunFam" id="1.10.442.10:FF:000001">
    <property type="entry name" value="Cytochrome c oxidase subunit 4 isoform 1"/>
    <property type="match status" value="1"/>
</dbReference>
<dbReference type="Gene3D" id="1.10.442.10">
    <property type="entry name" value="Cytochrome c oxidase subunit IV"/>
    <property type="match status" value="1"/>
</dbReference>
<dbReference type="InterPro" id="IPR013288">
    <property type="entry name" value="Cyt_c_oxidase_su4"/>
</dbReference>
<dbReference type="InterPro" id="IPR004203">
    <property type="entry name" value="Cyt_c_oxidase_su4_fam"/>
</dbReference>
<dbReference type="InterPro" id="IPR036639">
    <property type="entry name" value="Cyt_c_oxidase_su4_sf"/>
</dbReference>
<dbReference type="PANTHER" id="PTHR10707:SF12">
    <property type="entry name" value="CYTOCHROME C OXIDASE SUBUNIT 4 ISOFORM 1, MITOCHONDRIAL"/>
    <property type="match status" value="1"/>
</dbReference>
<dbReference type="PANTHER" id="PTHR10707">
    <property type="entry name" value="CYTOCHROME C OXIDASE SUBUNIT IV"/>
    <property type="match status" value="1"/>
</dbReference>
<dbReference type="Pfam" id="PF02936">
    <property type="entry name" value="COX4"/>
    <property type="match status" value="1"/>
</dbReference>
<dbReference type="PRINTS" id="PR01873">
    <property type="entry name" value="CYTCOXIDASE4"/>
</dbReference>
<dbReference type="SUPFAM" id="SSF81406">
    <property type="entry name" value="Mitochondrial cytochrome c oxidase subunit IV"/>
    <property type="match status" value="1"/>
</dbReference>
<sequence>SVVKSEDFSLPAYVDRRDHPLPEVAHVKLLSASQKALKENEKAAWSSLSMDEKVELYRIKFKESFAEMNRGSNEWKTVVGGAMFFIGFTALIIMWQKHYVYGPLPQTFDKEWVGKQTKRMLDMKVNPIQGLASKWDYEKNEWKK</sequence>
<proteinExistence type="inferred from homology"/>
<gene>
    <name type="primary">COX4I1</name>
    <name type="synonym">COX4</name>
</gene>
<evidence type="ECO:0000250" key="1">
    <source>
        <dbReference type="UniProtKB" id="P00423"/>
    </source>
</evidence>
<evidence type="ECO:0000250" key="2">
    <source>
        <dbReference type="UniProtKB" id="P00424"/>
    </source>
</evidence>
<evidence type="ECO:0000250" key="3">
    <source>
        <dbReference type="UniProtKB" id="P10888"/>
    </source>
</evidence>
<evidence type="ECO:0000250" key="4">
    <source>
        <dbReference type="UniProtKB" id="P13073"/>
    </source>
</evidence>
<evidence type="ECO:0000250" key="5">
    <source>
        <dbReference type="UniProtKB" id="P19783"/>
    </source>
</evidence>
<evidence type="ECO:0000305" key="6"/>
<reference key="1">
    <citation type="journal article" date="1997" name="J. Mol. Evol.">
        <title>Molecular evolution of cytochrome c oxidase subunit IV: evidence for positive selection in simian primates.</title>
        <authorList>
            <person name="Wu W."/>
            <person name="Goodman M."/>
            <person name="Lomax M.I."/>
            <person name="Grossman L.I."/>
        </authorList>
    </citation>
    <scope>NUCLEOTIDE SEQUENCE [GENOMIC DNA]</scope>
</reference>
<name>COX41_HYLAG</name>
<organism>
    <name type="scientific">Hylobates agilis</name>
    <name type="common">Agile gibbon</name>
    <dbReference type="NCBI Taxonomy" id="9579"/>
    <lineage>
        <taxon>Eukaryota</taxon>
        <taxon>Metazoa</taxon>
        <taxon>Chordata</taxon>
        <taxon>Craniata</taxon>
        <taxon>Vertebrata</taxon>
        <taxon>Euteleostomi</taxon>
        <taxon>Mammalia</taxon>
        <taxon>Eutheria</taxon>
        <taxon>Euarchontoglires</taxon>
        <taxon>Primates</taxon>
        <taxon>Haplorrhini</taxon>
        <taxon>Catarrhini</taxon>
        <taxon>Hylobatidae</taxon>
        <taxon>Hylobates</taxon>
    </lineage>
</organism>
<protein>
    <recommendedName>
        <fullName>Cytochrome c oxidase subunit 4 isoform 1, mitochondrial</fullName>
    </recommendedName>
    <alternativeName>
        <fullName>Cytochrome c oxidase polypeptide IV</fullName>
    </alternativeName>
    <alternativeName>
        <fullName>Cytochrome c oxidase subunit IV isoform 1</fullName>
        <shortName>COX IV-1</shortName>
    </alternativeName>
</protein>